<comment type="function">
    <text evidence="1">Plays a central role in 2-thiolation of mcm(5)S(2)U at tRNA wobble positions of cytosolic tRNA(Lys), tRNA(Glu) and tRNA(Gln). Also essential during biosynthesis of the molybdenum cofactor. Acts by mediating the C-terminal thiocarboxylation of sulfur carriers URM1 and MOCS2A. Its N-terminus first activates URM1 and MOCS2A as acyl-adenylates (-COAMP), then the persulfide sulfur on the catalytic cysteine is transferred to URM1 and MOCS2A to form thiocarboxylation (-COSH) of their C-terminus. The reaction probably involves hydrogen sulfide that is generated from the persulfide intermediate and that acts as a nucleophile towards URM1 and MOCS2A. Subsequently, a transient disulfide bond is formed. Does not use thiosulfate as sulfur donor; NFS1 probably acting as a sulfur donor for thiocarboxylation reactions.</text>
</comment>
<comment type="catalytic activity">
    <reaction evidence="1">
        <text>[molybdopterin-synthase sulfur-carrier protein]-C-terminal Gly-Gly + ATP + H(+) = [molybdopterin-synthase sulfur-carrier protein]-C-terminal Gly-Gly-AMP + diphosphate</text>
        <dbReference type="Rhea" id="RHEA:43616"/>
        <dbReference type="Rhea" id="RHEA-COMP:12159"/>
        <dbReference type="Rhea" id="RHEA-COMP:12202"/>
        <dbReference type="ChEBI" id="CHEBI:15378"/>
        <dbReference type="ChEBI" id="CHEBI:30616"/>
        <dbReference type="ChEBI" id="CHEBI:33019"/>
        <dbReference type="ChEBI" id="CHEBI:90618"/>
        <dbReference type="ChEBI" id="CHEBI:90778"/>
        <dbReference type="EC" id="2.7.7.80"/>
    </reaction>
</comment>
<comment type="catalytic activity">
    <reaction evidence="1">
        <text>[molybdopterin-synthase sulfur-carrier protein]-C-terminal Gly-Gly-AMP + S-sulfanyl-L-cysteinyl-[cysteine desulfurase] + AH2 = [molybdopterin-synthase sulfur-carrier protein]-C-terminal-Gly-aminoethanethioate + L-cysteinyl-[cysteine desulfurase] + A + AMP + 2 H(+)</text>
        <dbReference type="Rhea" id="RHEA:48612"/>
        <dbReference type="Rhea" id="RHEA-COMP:12157"/>
        <dbReference type="Rhea" id="RHEA-COMP:12158"/>
        <dbReference type="Rhea" id="RHEA-COMP:12159"/>
        <dbReference type="Rhea" id="RHEA-COMP:19907"/>
        <dbReference type="ChEBI" id="CHEBI:13193"/>
        <dbReference type="ChEBI" id="CHEBI:15378"/>
        <dbReference type="ChEBI" id="CHEBI:17499"/>
        <dbReference type="ChEBI" id="CHEBI:29950"/>
        <dbReference type="ChEBI" id="CHEBI:61963"/>
        <dbReference type="ChEBI" id="CHEBI:90618"/>
        <dbReference type="ChEBI" id="CHEBI:232372"/>
        <dbReference type="ChEBI" id="CHEBI:456215"/>
        <dbReference type="EC" id="2.8.1.11"/>
    </reaction>
</comment>
<comment type="cofactor">
    <cofactor evidence="1">
        <name>Zn(2+)</name>
        <dbReference type="ChEBI" id="CHEBI:29105"/>
    </cofactor>
    <text evidence="1">Binds 1 zinc ion per subunit.</text>
</comment>
<comment type="pathway">
    <text evidence="1">tRNA modification; 5-methoxycarbonylmethyl-2-thiouridine-tRNA biosynthesis.</text>
</comment>
<comment type="pathway">
    <text evidence="1">Cofactor biosynthesis; molybdopterin biosynthesis.</text>
</comment>
<comment type="subcellular location">
    <subcellularLocation>
        <location evidence="1">Cytoplasm</location>
    </subcellularLocation>
</comment>
<comment type="similarity">
    <text evidence="1">In the N-terminal section; belongs to the HesA/MoeB/ThiF family. UBA4 subfamily.</text>
</comment>
<gene>
    <name evidence="1" type="primary">MOCS3-2</name>
    <name evidence="1" type="synonym">CNX5</name>
    <name evidence="1" type="synonym">UBA4-2</name>
</gene>
<keyword id="KW-0067">ATP-binding</keyword>
<keyword id="KW-0963">Cytoplasm</keyword>
<keyword id="KW-0479">Metal-binding</keyword>
<keyword id="KW-0501">Molybdenum cofactor biosynthesis</keyword>
<keyword id="KW-0511">Multifunctional enzyme</keyword>
<keyword id="KW-0547">Nucleotide-binding</keyword>
<keyword id="KW-1185">Reference proteome</keyword>
<keyword id="KW-0808">Transferase</keyword>
<keyword id="KW-0819">tRNA processing</keyword>
<keyword id="KW-0862">Zinc</keyword>
<dbReference type="EC" id="2.7.7.80" evidence="1"/>
<dbReference type="EC" id="2.8.1.11" evidence="1"/>
<dbReference type="EMBL" id="BT034218">
    <property type="protein sequence ID" value="ACF79223.1"/>
    <property type="molecule type" value="mRNA"/>
</dbReference>
<dbReference type="RefSeq" id="NP_001130855.1">
    <property type="nucleotide sequence ID" value="NM_001137383.1"/>
</dbReference>
<dbReference type="SMR" id="B4FAT0"/>
<dbReference type="FunCoup" id="B4FAT0">
    <property type="interactions" value="2536"/>
</dbReference>
<dbReference type="STRING" id="4577.B4FAT0"/>
<dbReference type="PaxDb" id="4577-GRMZM2G157836_P01"/>
<dbReference type="GeneID" id="100191959"/>
<dbReference type="KEGG" id="zma:100191959"/>
<dbReference type="eggNOG" id="KOG2017">
    <property type="taxonomic scope" value="Eukaryota"/>
</dbReference>
<dbReference type="InParanoid" id="B4FAT0"/>
<dbReference type="OrthoDB" id="10261062at2759"/>
<dbReference type="UniPathway" id="UPA00344"/>
<dbReference type="UniPathway" id="UPA00988"/>
<dbReference type="Proteomes" id="UP000007305">
    <property type="component" value="Unplaced"/>
</dbReference>
<dbReference type="ExpressionAtlas" id="B4FAT0">
    <property type="expression patterns" value="baseline and differential"/>
</dbReference>
<dbReference type="GO" id="GO:0005737">
    <property type="term" value="C:cytoplasm"/>
    <property type="evidence" value="ECO:0000318"/>
    <property type="project" value="GO_Central"/>
</dbReference>
<dbReference type="GO" id="GO:0005829">
    <property type="term" value="C:cytosol"/>
    <property type="evidence" value="ECO:0007669"/>
    <property type="project" value="InterPro"/>
</dbReference>
<dbReference type="GO" id="GO:0005524">
    <property type="term" value="F:ATP binding"/>
    <property type="evidence" value="ECO:0007669"/>
    <property type="project" value="UniProtKB-KW"/>
</dbReference>
<dbReference type="GO" id="GO:0046872">
    <property type="term" value="F:metal ion binding"/>
    <property type="evidence" value="ECO:0007669"/>
    <property type="project" value="UniProtKB-KW"/>
</dbReference>
<dbReference type="GO" id="GO:0061605">
    <property type="term" value="F:molybdopterin-synthase adenylyltransferase activity"/>
    <property type="evidence" value="ECO:0007669"/>
    <property type="project" value="UniProtKB-EC"/>
</dbReference>
<dbReference type="GO" id="GO:0061604">
    <property type="term" value="F:molybdopterin-synthase sulfurtransferase activity"/>
    <property type="evidence" value="ECO:0007669"/>
    <property type="project" value="UniProtKB-EC"/>
</dbReference>
<dbReference type="GO" id="GO:0016779">
    <property type="term" value="F:nucleotidyltransferase activity"/>
    <property type="evidence" value="ECO:0000318"/>
    <property type="project" value="GO_Central"/>
</dbReference>
<dbReference type="GO" id="GO:0004792">
    <property type="term" value="F:thiosulfate-cyanide sulfurtransferase activity"/>
    <property type="evidence" value="ECO:0000318"/>
    <property type="project" value="GO_Central"/>
</dbReference>
<dbReference type="GO" id="GO:0042292">
    <property type="term" value="F:URM1 activating enzyme activity"/>
    <property type="evidence" value="ECO:0000318"/>
    <property type="project" value="GO_Central"/>
</dbReference>
<dbReference type="GO" id="GO:0006777">
    <property type="term" value="P:Mo-molybdopterin cofactor biosynthetic process"/>
    <property type="evidence" value="ECO:0007669"/>
    <property type="project" value="UniProtKB-UniRule"/>
</dbReference>
<dbReference type="GO" id="GO:0002143">
    <property type="term" value="P:tRNA wobble position uridine thiolation"/>
    <property type="evidence" value="ECO:0007669"/>
    <property type="project" value="InterPro"/>
</dbReference>
<dbReference type="CDD" id="cd00757">
    <property type="entry name" value="ThiF_MoeB_HesA_family"/>
    <property type="match status" value="1"/>
</dbReference>
<dbReference type="FunFam" id="3.40.250.10:FF:000014">
    <property type="entry name" value="Adenylyltransferase and sulfurtransferase MOCS3"/>
    <property type="match status" value="1"/>
</dbReference>
<dbReference type="FunFam" id="3.40.50.720:FF:000033">
    <property type="entry name" value="Adenylyltransferase and sulfurtransferase MOCS3"/>
    <property type="match status" value="1"/>
</dbReference>
<dbReference type="Gene3D" id="3.40.50.720">
    <property type="entry name" value="NAD(P)-binding Rossmann-like Domain"/>
    <property type="match status" value="1"/>
</dbReference>
<dbReference type="Gene3D" id="3.40.250.10">
    <property type="entry name" value="Rhodanese-like domain"/>
    <property type="match status" value="1"/>
</dbReference>
<dbReference type="HAMAP" id="MF_03049">
    <property type="entry name" value="MOCS3_Uba4"/>
    <property type="match status" value="1"/>
</dbReference>
<dbReference type="InterPro" id="IPR028885">
    <property type="entry name" value="MOCS3/Uba4"/>
</dbReference>
<dbReference type="InterPro" id="IPR001763">
    <property type="entry name" value="Rhodanese-like_dom"/>
</dbReference>
<dbReference type="InterPro" id="IPR036873">
    <property type="entry name" value="Rhodanese-like_dom_sf"/>
</dbReference>
<dbReference type="InterPro" id="IPR045886">
    <property type="entry name" value="ThiF/MoeB/HesA"/>
</dbReference>
<dbReference type="InterPro" id="IPR000594">
    <property type="entry name" value="ThiF_NAD_FAD-bd"/>
</dbReference>
<dbReference type="InterPro" id="IPR035985">
    <property type="entry name" value="Ubiquitin-activating_enz"/>
</dbReference>
<dbReference type="NCBIfam" id="NF004281">
    <property type="entry name" value="PRK05690.1"/>
    <property type="match status" value="1"/>
</dbReference>
<dbReference type="PANTHER" id="PTHR10953:SF102">
    <property type="entry name" value="ADENYLYLTRANSFERASE AND SULFURTRANSFERASE MOCS3"/>
    <property type="match status" value="1"/>
</dbReference>
<dbReference type="PANTHER" id="PTHR10953">
    <property type="entry name" value="UBIQUITIN-ACTIVATING ENZYME E1"/>
    <property type="match status" value="1"/>
</dbReference>
<dbReference type="Pfam" id="PF00581">
    <property type="entry name" value="Rhodanese"/>
    <property type="match status" value="1"/>
</dbReference>
<dbReference type="Pfam" id="PF00899">
    <property type="entry name" value="ThiF"/>
    <property type="match status" value="1"/>
</dbReference>
<dbReference type="SMART" id="SM00450">
    <property type="entry name" value="RHOD"/>
    <property type="match status" value="1"/>
</dbReference>
<dbReference type="SUPFAM" id="SSF69572">
    <property type="entry name" value="Activating enzymes of the ubiquitin-like proteins"/>
    <property type="match status" value="1"/>
</dbReference>
<dbReference type="PROSITE" id="PS50206">
    <property type="entry name" value="RHODANESE_3"/>
    <property type="match status" value="1"/>
</dbReference>
<name>MOC32_MAIZE</name>
<protein>
    <recommendedName>
        <fullName evidence="1">Adenylyltransferase and sulfurtransferase MOCS3-2</fullName>
    </recommendedName>
    <alternativeName>
        <fullName evidence="1">Molybdenum cofactor synthesis protein 3-2</fullName>
    </alternativeName>
    <domain>
        <recommendedName>
            <fullName evidence="1">Molybdopterin-synthase adenylyltransferase 2</fullName>
            <ecNumber evidence="1">2.7.7.80</ecNumber>
        </recommendedName>
        <alternativeName>
            <fullName evidence="1">Adenylyltransferase MOCS3-2</fullName>
        </alternativeName>
        <alternativeName>
            <fullName evidence="1">Sulfur carrier protein MOCS2A adenylyltransferase 2</fullName>
        </alternativeName>
    </domain>
    <domain>
        <recommendedName>
            <fullName evidence="1">Molybdopterin-synthase sulfurtransferase 2</fullName>
            <ecNumber evidence="1">2.8.1.11</ecNumber>
        </recommendedName>
        <alternativeName>
            <fullName evidence="1">Sulfur carrier protein MOCS2A sulfurtransferase 2</fullName>
        </alternativeName>
        <alternativeName>
            <fullName evidence="1">Sulfurtransferase MOCS3-2</fullName>
        </alternativeName>
    </domain>
</protein>
<proteinExistence type="evidence at transcript level"/>
<evidence type="ECO:0000255" key="1">
    <source>
        <dbReference type="HAMAP-Rule" id="MF_03049"/>
    </source>
</evidence>
<accession>B4FAT0</accession>
<organism>
    <name type="scientific">Zea mays</name>
    <name type="common">Maize</name>
    <dbReference type="NCBI Taxonomy" id="4577"/>
    <lineage>
        <taxon>Eukaryota</taxon>
        <taxon>Viridiplantae</taxon>
        <taxon>Streptophyta</taxon>
        <taxon>Embryophyta</taxon>
        <taxon>Tracheophyta</taxon>
        <taxon>Spermatophyta</taxon>
        <taxon>Magnoliopsida</taxon>
        <taxon>Liliopsida</taxon>
        <taxon>Poales</taxon>
        <taxon>Poaceae</taxon>
        <taxon>PACMAD clade</taxon>
        <taxon>Panicoideae</taxon>
        <taxon>Andropogonodae</taxon>
        <taxon>Andropogoneae</taxon>
        <taxon>Tripsacinae</taxon>
        <taxon>Zea</taxon>
    </lineage>
</organism>
<reference key="1">
    <citation type="submission" date="2008-07" db="EMBL/GenBank/DDBJ databases">
        <title>Maize full-length cDNA project.</title>
        <authorList>
            <person name="Yu Y."/>
            <person name="Currie J."/>
            <person name="Lomeli R."/>
            <person name="Angelova A."/>
            <person name="Collura K."/>
            <person name="Wissotski M."/>
            <person name="Campos D."/>
            <person name="Kudrna D."/>
            <person name="Golser W."/>
            <person name="Ashely E."/>
            <person name="Haller K."/>
            <person name="Descour A."/>
            <person name="Fernandes J."/>
            <person name="Zuccolo A."/>
            <person name="Soderlund C."/>
            <person name="Walbot V."/>
        </authorList>
    </citation>
    <scope>NUCLEOTIDE SEQUENCE [LARGE SCALE MRNA]</scope>
    <source>
        <strain>cv. B73</strain>
    </source>
</reference>
<feature type="chain" id="PRO_0000369214" description="Adenylyltransferase and sulfurtransferase MOCS3-2">
    <location>
        <begin position="1"/>
        <end position="482"/>
    </location>
</feature>
<feature type="domain" description="Rhodanese" evidence="1">
    <location>
        <begin position="385"/>
        <end position="480"/>
    </location>
</feature>
<feature type="active site" description="Glycyl thioester intermediate; for adenylyltransferase activity" evidence="1">
    <location>
        <position position="272"/>
    </location>
</feature>
<feature type="active site" description="Cysteine persulfide intermediate; for sulfurtransferase activity" evidence="1">
    <location>
        <position position="440"/>
    </location>
</feature>
<feature type="binding site" evidence="1">
    <location>
        <position position="125"/>
    </location>
    <ligand>
        <name>ATP</name>
        <dbReference type="ChEBI" id="CHEBI:30616"/>
    </ligand>
</feature>
<feature type="binding site" evidence="1">
    <location>
        <position position="146"/>
    </location>
    <ligand>
        <name>ATP</name>
        <dbReference type="ChEBI" id="CHEBI:30616"/>
    </ligand>
</feature>
<feature type="binding site" evidence="1">
    <location>
        <begin position="153"/>
        <end position="157"/>
    </location>
    <ligand>
        <name>ATP</name>
        <dbReference type="ChEBI" id="CHEBI:30616"/>
    </ligand>
</feature>
<feature type="binding site" evidence="1">
    <location>
        <position position="170"/>
    </location>
    <ligand>
        <name>ATP</name>
        <dbReference type="ChEBI" id="CHEBI:30616"/>
    </ligand>
</feature>
<feature type="binding site" evidence="1">
    <location>
        <begin position="214"/>
        <end position="215"/>
    </location>
    <ligand>
        <name>ATP</name>
        <dbReference type="ChEBI" id="CHEBI:30616"/>
    </ligand>
</feature>
<feature type="binding site" evidence="1">
    <location>
        <position position="255"/>
    </location>
    <ligand>
        <name>Zn(2+)</name>
        <dbReference type="ChEBI" id="CHEBI:29105"/>
    </ligand>
</feature>
<feature type="binding site" evidence="1">
    <location>
        <position position="258"/>
    </location>
    <ligand>
        <name>Zn(2+)</name>
        <dbReference type="ChEBI" id="CHEBI:29105"/>
    </ligand>
</feature>
<feature type="binding site" evidence="1">
    <location>
        <position position="330"/>
    </location>
    <ligand>
        <name>Zn(2+)</name>
        <dbReference type="ChEBI" id="CHEBI:29105"/>
    </ligand>
</feature>
<feature type="binding site" evidence="1">
    <location>
        <position position="333"/>
    </location>
    <ligand>
        <name>Zn(2+)</name>
        <dbReference type="ChEBI" id="CHEBI:29105"/>
    </ligand>
</feature>
<sequence>MLRTRGPGSILDPPLGGRREAIERELKKLRAEREELDGRIRLLESQLEAGPAGFNGAAAGKGVGDDACGGSGACQSRVGNGFAPDGSLPADMIYRYSRHLLLPDFGVEGQRKLSQSSILVVGAGGLGSPLALYLAACGVGCLGIVDGDDVELNNLHRQIIHKEAYVGQSKVKSAADACREINSAIKVVEHHHTLKPCNALEIARKYDIVVDATDNLPTRYMISDCCVLLNKPLVSGAALGLEGQLTVYHHNGSPCYRCLFPTPPPVAACQRCSDSGVLGVVPGVIGCLQALEAIKVATGVGEPLCGRMLLFDALSARIRVVKLRGSSPDCTHCGENSVFTEEDFQKFDYESFTQSPMSDKAAASVNVLPESARITCREYKKLADDGEPHLLLDVRPAHHFQIASISPSHNIPLSMLEEKLPALEASLKEAGEGSALVVLCRRGNDSQRAVQLLREKGFANAKDIIGGLQAWGQDVDPDFPVY</sequence>